<proteinExistence type="inferred from homology"/>
<keyword id="KW-0378">Hydrolase</keyword>
<keyword id="KW-1185">Reference proteome</keyword>
<keyword id="KW-0719">Serine esterase</keyword>
<feature type="chain" id="PRO_0000223662" description="Protein phosphatase methylesterase 1">
    <location>
        <begin position="1"/>
        <end position="386"/>
    </location>
</feature>
<feature type="region of interest" description="Disordered" evidence="2">
    <location>
        <begin position="20"/>
        <end position="48"/>
    </location>
</feature>
<feature type="active site" evidence="1">
    <location>
        <position position="194"/>
    </location>
</feature>
<feature type="active site" evidence="1">
    <location>
        <position position="222"/>
    </location>
</feature>
<feature type="active site" evidence="1">
    <location>
        <position position="348"/>
    </location>
</feature>
<name>PPME1_CANGA</name>
<protein>
    <recommendedName>
        <fullName>Protein phosphatase methylesterase 1</fullName>
        <shortName>PME-1</shortName>
        <ecNumber>3.1.1.89</ecNumber>
    </recommendedName>
</protein>
<sequence length="386" mass="43659">MGDDLKRKILLHNLSSNNPILEKLKGGQEPNSNEEGSDSIGDLPSLKNDYKRQDNNSTNCTYIPPSQWNTYFRSNEHIKVQSRNIEFNTYYTVPSSILGPSLPVFIFHHGAGSSGLSFANLARNLGDQLNNNCCCLSFDARGHGGTKFIDAKQAQNYFRDDFVDDFHTLVEYFVSEKLKHLPTEKLSIIFIGHSLGGSICTFTYSKLSIELKKQVIGVAMFDIVEEAATLALEKVNHFLQVTPNMFSGYEEAIDWHVSHELSRLRESADIAIPALFKSTESGKVVRITNLETFRPFWRTWFSDLSKSFVSLPTCKLLILAGNDNLDRELIIGQMQGKYQLVVFQDSGHFIQEDTPRKTALTLVDFWKRNDNKNVVIKSNWGSSNKV</sequence>
<comment type="function">
    <text evidence="1">Demethylates proteins that have been reversibly carboxymethylated. Demethylates the phosphatase PP2A catalytic subunit (By similarity).</text>
</comment>
<comment type="catalytic activity">
    <reaction>
        <text>[phosphatase 2A protein]-C-terminal L-leucine methyl ester + H2O = [phosphatase 2A protein]-C-terminal L-leucine + methanol + H(+)</text>
        <dbReference type="Rhea" id="RHEA:48548"/>
        <dbReference type="Rhea" id="RHEA-COMP:12134"/>
        <dbReference type="Rhea" id="RHEA-COMP:12135"/>
        <dbReference type="ChEBI" id="CHEBI:15377"/>
        <dbReference type="ChEBI" id="CHEBI:15378"/>
        <dbReference type="ChEBI" id="CHEBI:17790"/>
        <dbReference type="ChEBI" id="CHEBI:90516"/>
        <dbReference type="ChEBI" id="CHEBI:90517"/>
        <dbReference type="EC" id="3.1.1.89"/>
    </reaction>
</comment>
<comment type="similarity">
    <text evidence="3">Belongs to the AB hydrolase superfamily.</text>
</comment>
<evidence type="ECO:0000250" key="1"/>
<evidence type="ECO:0000256" key="2">
    <source>
        <dbReference type="SAM" id="MobiDB-lite"/>
    </source>
</evidence>
<evidence type="ECO:0000305" key="3"/>
<gene>
    <name type="primary">PPE1</name>
    <name type="ordered locus">CAGL0J10736g</name>
</gene>
<dbReference type="EC" id="3.1.1.89"/>
<dbReference type="EMBL" id="CR380956">
    <property type="protein sequence ID" value="CAG61129.1"/>
    <property type="molecule type" value="Genomic_DNA"/>
</dbReference>
<dbReference type="RefSeq" id="XP_448178.1">
    <property type="nucleotide sequence ID" value="XM_448178.1"/>
</dbReference>
<dbReference type="SMR" id="Q6FNL6"/>
<dbReference type="FunCoup" id="Q6FNL6">
    <property type="interactions" value="894"/>
</dbReference>
<dbReference type="STRING" id="284593.Q6FNL6"/>
<dbReference type="ESTHER" id="canga-ppme1">
    <property type="family name" value="PPase_methylesterase_euk"/>
</dbReference>
<dbReference type="EnsemblFungi" id="CAGL0J10736g-T">
    <property type="protein sequence ID" value="CAGL0J10736g-T-p1"/>
    <property type="gene ID" value="CAGL0J10736g"/>
</dbReference>
<dbReference type="KEGG" id="cgr:2889616"/>
<dbReference type="CGD" id="CAL0133726">
    <property type="gene designation" value="CAGL0J10736g"/>
</dbReference>
<dbReference type="VEuPathDB" id="FungiDB:B1J91_J10736g"/>
<dbReference type="VEuPathDB" id="FungiDB:CAGL0J10736g"/>
<dbReference type="eggNOG" id="KOG2564">
    <property type="taxonomic scope" value="Eukaryota"/>
</dbReference>
<dbReference type="HOGENOM" id="CLU_024818_3_0_1"/>
<dbReference type="InParanoid" id="Q6FNL6"/>
<dbReference type="OMA" id="VMVCHHG"/>
<dbReference type="Proteomes" id="UP000002428">
    <property type="component" value="Chromosome J"/>
</dbReference>
<dbReference type="GO" id="GO:0005763">
    <property type="term" value="C:mitochondrial small ribosomal subunit"/>
    <property type="evidence" value="ECO:0007669"/>
    <property type="project" value="EnsemblFungi"/>
</dbReference>
<dbReference type="GO" id="GO:0051722">
    <property type="term" value="F:protein C-terminal methylesterase activity"/>
    <property type="evidence" value="ECO:0007669"/>
    <property type="project" value="UniProtKB-EC"/>
</dbReference>
<dbReference type="Gene3D" id="3.40.50.1820">
    <property type="entry name" value="alpha/beta hydrolase"/>
    <property type="match status" value="1"/>
</dbReference>
<dbReference type="InterPro" id="IPR000073">
    <property type="entry name" value="AB_hydrolase_1"/>
</dbReference>
<dbReference type="InterPro" id="IPR029058">
    <property type="entry name" value="AB_hydrolase_fold"/>
</dbReference>
<dbReference type="InterPro" id="IPR016812">
    <property type="entry name" value="PPase_methylesterase_euk"/>
</dbReference>
<dbReference type="PANTHER" id="PTHR14189:SF0">
    <property type="entry name" value="PROTEIN PHOSPHATASE METHYLESTERASE 1"/>
    <property type="match status" value="1"/>
</dbReference>
<dbReference type="PANTHER" id="PTHR14189">
    <property type="entry name" value="PROTEIN PHOSPHATASE METHYLESTERASE-1 RELATED"/>
    <property type="match status" value="1"/>
</dbReference>
<dbReference type="Pfam" id="PF00561">
    <property type="entry name" value="Abhydrolase_1"/>
    <property type="match status" value="1"/>
</dbReference>
<dbReference type="PIRSF" id="PIRSF022950">
    <property type="entry name" value="PPase_methylesterase_euk"/>
    <property type="match status" value="1"/>
</dbReference>
<dbReference type="SUPFAM" id="SSF53474">
    <property type="entry name" value="alpha/beta-Hydrolases"/>
    <property type="match status" value="1"/>
</dbReference>
<accession>Q6FNL6</accession>
<reference key="1">
    <citation type="journal article" date="2004" name="Nature">
        <title>Genome evolution in yeasts.</title>
        <authorList>
            <person name="Dujon B."/>
            <person name="Sherman D."/>
            <person name="Fischer G."/>
            <person name="Durrens P."/>
            <person name="Casaregola S."/>
            <person name="Lafontaine I."/>
            <person name="de Montigny J."/>
            <person name="Marck C."/>
            <person name="Neuveglise C."/>
            <person name="Talla E."/>
            <person name="Goffard N."/>
            <person name="Frangeul L."/>
            <person name="Aigle M."/>
            <person name="Anthouard V."/>
            <person name="Babour A."/>
            <person name="Barbe V."/>
            <person name="Barnay S."/>
            <person name="Blanchin S."/>
            <person name="Beckerich J.-M."/>
            <person name="Beyne E."/>
            <person name="Bleykasten C."/>
            <person name="Boisrame A."/>
            <person name="Boyer J."/>
            <person name="Cattolico L."/>
            <person name="Confanioleri F."/>
            <person name="de Daruvar A."/>
            <person name="Despons L."/>
            <person name="Fabre E."/>
            <person name="Fairhead C."/>
            <person name="Ferry-Dumazet H."/>
            <person name="Groppi A."/>
            <person name="Hantraye F."/>
            <person name="Hennequin C."/>
            <person name="Jauniaux N."/>
            <person name="Joyet P."/>
            <person name="Kachouri R."/>
            <person name="Kerrest A."/>
            <person name="Koszul R."/>
            <person name="Lemaire M."/>
            <person name="Lesur I."/>
            <person name="Ma L."/>
            <person name="Muller H."/>
            <person name="Nicaud J.-M."/>
            <person name="Nikolski M."/>
            <person name="Oztas S."/>
            <person name="Ozier-Kalogeropoulos O."/>
            <person name="Pellenz S."/>
            <person name="Potier S."/>
            <person name="Richard G.-F."/>
            <person name="Straub M.-L."/>
            <person name="Suleau A."/>
            <person name="Swennen D."/>
            <person name="Tekaia F."/>
            <person name="Wesolowski-Louvel M."/>
            <person name="Westhof E."/>
            <person name="Wirth B."/>
            <person name="Zeniou-Meyer M."/>
            <person name="Zivanovic Y."/>
            <person name="Bolotin-Fukuhara M."/>
            <person name="Thierry A."/>
            <person name="Bouchier C."/>
            <person name="Caudron B."/>
            <person name="Scarpelli C."/>
            <person name="Gaillardin C."/>
            <person name="Weissenbach J."/>
            <person name="Wincker P."/>
            <person name="Souciet J.-L."/>
        </authorList>
    </citation>
    <scope>NUCLEOTIDE SEQUENCE [LARGE SCALE GENOMIC DNA]</scope>
    <source>
        <strain>ATCC 2001 / BCRC 20586 / JCM 3761 / NBRC 0622 / NRRL Y-65 / CBS 138</strain>
    </source>
</reference>
<organism>
    <name type="scientific">Candida glabrata (strain ATCC 2001 / BCRC 20586 / JCM 3761 / NBRC 0622 / NRRL Y-65 / CBS 138)</name>
    <name type="common">Yeast</name>
    <name type="synonym">Nakaseomyces glabratus</name>
    <dbReference type="NCBI Taxonomy" id="284593"/>
    <lineage>
        <taxon>Eukaryota</taxon>
        <taxon>Fungi</taxon>
        <taxon>Dikarya</taxon>
        <taxon>Ascomycota</taxon>
        <taxon>Saccharomycotina</taxon>
        <taxon>Saccharomycetes</taxon>
        <taxon>Saccharomycetales</taxon>
        <taxon>Saccharomycetaceae</taxon>
        <taxon>Nakaseomyces</taxon>
    </lineage>
</organism>